<evidence type="ECO:0000250" key="1">
    <source>
        <dbReference type="UniProtKB" id="P0CC17"/>
    </source>
</evidence>
<evidence type="ECO:0000250" key="2">
    <source>
        <dbReference type="UniProtKB" id="P81382"/>
    </source>
</evidence>
<evidence type="ECO:0000269" key="3">
    <source>
    </source>
</evidence>
<evidence type="ECO:0000269" key="4">
    <source>
    </source>
</evidence>
<evidence type="ECO:0000303" key="5">
    <source>
    </source>
</evidence>
<evidence type="ECO:0000303" key="6">
    <source>
    </source>
</evidence>
<evidence type="ECO:0000305" key="7"/>
<evidence type="ECO:0000305" key="8">
    <source>
    </source>
</evidence>
<evidence type="ECO:0000305" key="9">
    <source>
    </source>
</evidence>
<dbReference type="EC" id="1.4.3.2" evidence="4"/>
<dbReference type="SABIO-RK" id="P0C2D4"/>
<dbReference type="GO" id="GO:0005576">
    <property type="term" value="C:extracellular region"/>
    <property type="evidence" value="ECO:0007669"/>
    <property type="project" value="UniProtKB-SubCell"/>
</dbReference>
<dbReference type="GO" id="GO:0106329">
    <property type="term" value="F:L-phenylalaine oxidase activity"/>
    <property type="evidence" value="ECO:0007669"/>
    <property type="project" value="RHEA"/>
</dbReference>
<dbReference type="GO" id="GO:0090729">
    <property type="term" value="F:toxin activity"/>
    <property type="evidence" value="ECO:0007669"/>
    <property type="project" value="UniProtKB-KW"/>
</dbReference>
<dbReference type="GO" id="GO:0006915">
    <property type="term" value="P:apoptotic process"/>
    <property type="evidence" value="ECO:0007669"/>
    <property type="project" value="UniProtKB-KW"/>
</dbReference>
<dbReference type="GO" id="GO:0042742">
    <property type="term" value="P:defense response to bacterium"/>
    <property type="evidence" value="ECO:0007669"/>
    <property type="project" value="UniProtKB-KW"/>
</dbReference>
<dbReference type="GO" id="GO:0031640">
    <property type="term" value="P:killing of cells of another organism"/>
    <property type="evidence" value="ECO:0007669"/>
    <property type="project" value="UniProtKB-KW"/>
</dbReference>
<dbReference type="Gene3D" id="3.90.660.10">
    <property type="match status" value="1"/>
</dbReference>
<protein>
    <recommendedName>
        <fullName evidence="5 6">L-amino-acid oxidase</fullName>
        <shortName evidence="5">K-LAO</shortName>
        <shortName evidence="6">LAAO</shortName>
        <ecNumber evidence="4">1.4.3.2</ecNumber>
    </recommendedName>
</protein>
<comment type="function">
    <text evidence="1 3 4">Catalyzes an oxidative deamination of predominantly hydrophobic and aromatic L-amino acids, thus producing hydrogen peroxide that may contribute to the diverse toxic effects of this enzyme (PubMed:1612186). Is very active against L-Phe and L-Tyr, moderately active against L-Trp, L-Met, L-Leu, L-norleucine (L-2-aminohexanoate), L-Arg and L-norvaline (L-2-aminopentanoate), and slightly active against L-His, L-cystine, and L-Ile (PubMed:1612186). L-Gln, L-Lys, L-Asn, L-ornithine, L-Ala and L-Val are oxidized very slowly (PubMed:1612186). Exhibits diverse biological activities, such as hemorrhage, hemolysis, edema, apoptosis of vascular endothelial cells or tumor cell lines, antibacterial and antiparasitic activities (By similarity). This protein inhibits both agonist- and shear stress-induced platelet aggregation (SIPA) (PubMed:11600144). Effects of snake L-amino oxidases on platelets are controversial, since they either induce aggregation or inhibit agonist-induced aggregation. These different effects are probably due to different experimental conditions.</text>
</comment>
<comment type="catalytic activity">
    <reaction evidence="4">
        <text>an L-alpha-amino acid + O2 + H2O = a 2-oxocarboxylate + H2O2 + NH4(+)</text>
        <dbReference type="Rhea" id="RHEA:13781"/>
        <dbReference type="ChEBI" id="CHEBI:15377"/>
        <dbReference type="ChEBI" id="CHEBI:15379"/>
        <dbReference type="ChEBI" id="CHEBI:16240"/>
        <dbReference type="ChEBI" id="CHEBI:28938"/>
        <dbReference type="ChEBI" id="CHEBI:35179"/>
        <dbReference type="ChEBI" id="CHEBI:59869"/>
        <dbReference type="EC" id="1.4.3.2"/>
    </reaction>
</comment>
<comment type="catalytic activity">
    <reaction evidence="4">
        <text>L-leucine + O2 + H2O = 4-methyl-2-oxopentanoate + H2O2 + NH4(+)</text>
        <dbReference type="Rhea" id="RHEA:60996"/>
        <dbReference type="ChEBI" id="CHEBI:15377"/>
        <dbReference type="ChEBI" id="CHEBI:15379"/>
        <dbReference type="ChEBI" id="CHEBI:16240"/>
        <dbReference type="ChEBI" id="CHEBI:17865"/>
        <dbReference type="ChEBI" id="CHEBI:28938"/>
        <dbReference type="ChEBI" id="CHEBI:57427"/>
    </reaction>
</comment>
<comment type="catalytic activity">
    <reaction evidence="4">
        <text>L-phenylalanine + O2 + H2O = 3-phenylpyruvate + H2O2 + NH4(+)</text>
        <dbReference type="Rhea" id="RHEA:61240"/>
        <dbReference type="ChEBI" id="CHEBI:15377"/>
        <dbReference type="ChEBI" id="CHEBI:15379"/>
        <dbReference type="ChEBI" id="CHEBI:16240"/>
        <dbReference type="ChEBI" id="CHEBI:18005"/>
        <dbReference type="ChEBI" id="CHEBI:28938"/>
        <dbReference type="ChEBI" id="CHEBI:58095"/>
    </reaction>
</comment>
<comment type="catalytic activity">
    <reaction evidence="4">
        <text>L-tryptophan + O2 + H2O = indole-3-pyruvate + H2O2 + NH4(+)</text>
        <dbReference type="Rhea" id="RHEA:61244"/>
        <dbReference type="ChEBI" id="CHEBI:15377"/>
        <dbReference type="ChEBI" id="CHEBI:15379"/>
        <dbReference type="ChEBI" id="CHEBI:16240"/>
        <dbReference type="ChEBI" id="CHEBI:17640"/>
        <dbReference type="ChEBI" id="CHEBI:28938"/>
        <dbReference type="ChEBI" id="CHEBI:57912"/>
    </reaction>
</comment>
<comment type="catalytic activity">
    <reaction evidence="4">
        <text>L-methionine + O2 + H2O = 4-methylsulfanyl-2-oxobutanoate + H2O2 + NH4(+)</text>
        <dbReference type="Rhea" id="RHEA:61236"/>
        <dbReference type="ChEBI" id="CHEBI:15377"/>
        <dbReference type="ChEBI" id="CHEBI:15379"/>
        <dbReference type="ChEBI" id="CHEBI:16240"/>
        <dbReference type="ChEBI" id="CHEBI:16723"/>
        <dbReference type="ChEBI" id="CHEBI:28938"/>
        <dbReference type="ChEBI" id="CHEBI:57844"/>
    </reaction>
</comment>
<comment type="catalytic activity">
    <reaction evidence="4">
        <text>L-arginine + O2 + H2O = 5-guanidino-2-oxopentanoate + H2O2 + NH4(+)</text>
        <dbReference type="Rhea" id="RHEA:51404"/>
        <dbReference type="ChEBI" id="CHEBI:15377"/>
        <dbReference type="ChEBI" id="CHEBI:15379"/>
        <dbReference type="ChEBI" id="CHEBI:16240"/>
        <dbReference type="ChEBI" id="CHEBI:28938"/>
        <dbReference type="ChEBI" id="CHEBI:32682"/>
        <dbReference type="ChEBI" id="CHEBI:58489"/>
    </reaction>
</comment>
<comment type="catalytic activity">
    <reaction evidence="4">
        <text>L-2-aminohexanoate + O2 + H2O = 2-oxohexanoate + H2O2 + NH4(+)</text>
        <dbReference type="Rhea" id="RHEA:61268"/>
        <dbReference type="ChEBI" id="CHEBI:15377"/>
        <dbReference type="ChEBI" id="CHEBI:15379"/>
        <dbReference type="ChEBI" id="CHEBI:16240"/>
        <dbReference type="ChEBI" id="CHEBI:28938"/>
        <dbReference type="ChEBI" id="CHEBI:35177"/>
        <dbReference type="ChEBI" id="CHEBI:58455"/>
    </reaction>
</comment>
<comment type="catalytic activity">
    <reaction evidence="4">
        <text>L-2-aminopentanoate + O2 + H2O = 2-oxopentanoate + H2O2 + NH4(+)</text>
        <dbReference type="Rhea" id="RHEA:61272"/>
        <dbReference type="ChEBI" id="CHEBI:15377"/>
        <dbReference type="ChEBI" id="CHEBI:15379"/>
        <dbReference type="ChEBI" id="CHEBI:16240"/>
        <dbReference type="ChEBI" id="CHEBI:28644"/>
        <dbReference type="ChEBI" id="CHEBI:28938"/>
        <dbReference type="ChEBI" id="CHEBI:58441"/>
    </reaction>
</comment>
<comment type="catalytic activity">
    <reaction evidence="4">
        <text>L-tyrosine + O2 + H2O = 3-(4-hydroxyphenyl)pyruvate + H2O2 + NH4(+)</text>
        <dbReference type="Rhea" id="RHEA:61248"/>
        <dbReference type="ChEBI" id="CHEBI:15377"/>
        <dbReference type="ChEBI" id="CHEBI:15379"/>
        <dbReference type="ChEBI" id="CHEBI:16240"/>
        <dbReference type="ChEBI" id="CHEBI:28938"/>
        <dbReference type="ChEBI" id="CHEBI:36242"/>
        <dbReference type="ChEBI" id="CHEBI:58315"/>
    </reaction>
</comment>
<comment type="cofactor">
    <cofactor evidence="2">
        <name>FAD</name>
        <dbReference type="ChEBI" id="CHEBI:57692"/>
    </cofactor>
</comment>
<comment type="biophysicochemical properties">
    <kinetics>
        <KM evidence="4">0.023 mM for L-Tyr</KM>
        <KM evidence="4">0.06 mM for L-Phe</KM>
        <KM evidence="4">0.29 mM for L-Trp</KM>
        <KM evidence="4">0.63 mM for L-Met</KM>
        <KM evidence="4">0.66 mM for L-Leu</KM>
        <KM evidence="4">1.69 mM for L-Arg</KM>
        <KM evidence="4">2.86 mM for L-Cys</KM>
        <KM evidence="4">5 mM for L-Ile</KM>
        <KM evidence="4">5.49 mM for L-His</KM>
        <KM evidence="4">11.59 mM for L-Asp</KM>
    </kinetics>
    <phDependence>
        <text evidence="4">Optimum pH is 8.5, unlike many other venom L-amino acid oxidase, is also stable in alkaline medium.</text>
    </phDependence>
</comment>
<comment type="subunit">
    <text evidence="4">Homodimer; non-covalently linked.</text>
</comment>
<comment type="subcellular location">
    <subcellularLocation>
        <location evidence="3 4">Secreted</location>
    </subcellularLocation>
</comment>
<comment type="tissue specificity">
    <text evidence="8 9">Expressed by the venom gland.</text>
</comment>
<comment type="PTM">
    <text evidence="2">N-glycosylated.</text>
</comment>
<comment type="similarity">
    <text evidence="7">Belongs to the flavin monoamine oxidase family. FIG1 subfamily.</text>
</comment>
<reference key="1">
    <citation type="journal article" date="2001" name="Toxicon">
        <title>Inhibition of human platelet aggregation by L-amino acid oxidase purified from Naja naja kaouthia venom.</title>
        <authorList>
            <person name="Sakurai Y."/>
            <person name="Takatsuka H."/>
            <person name="Yoshioka A."/>
            <person name="Matsui T."/>
            <person name="Suzuki M."/>
            <person name="Titani K."/>
            <person name="Fujimura Y."/>
        </authorList>
    </citation>
    <scope>PROTEIN SEQUENCE</scope>
    <scope>FUNCTION</scope>
    <scope>SUBCELLULAR LOCATION</scope>
    <source>
        <tissue>Venom</tissue>
    </source>
</reference>
<reference key="2">
    <citation type="journal article" date="1992" name="Int. J. Biochem.">
        <title>Purification and properties of the L-amino acid oxidase from monocellate cobra (Naja naja kaouthia) venom.</title>
        <authorList>
            <person name="Tan N.-H."/>
            <person name="Swaminathan S."/>
        </authorList>
    </citation>
    <scope>FUNCTION</scope>
    <scope>BIOPHYSICOCHEMICAL PROPERTIES</scope>
    <scope>SUBUNIT</scope>
    <scope>SUBSTRATE SPECIFICITY</scope>
    <scope>CATALYTIC ACTIVITY</scope>
    <scope>SUBCELLULAR LOCATION</scope>
    <source>
        <tissue>Venom</tissue>
    </source>
</reference>
<feature type="chain" id="PRO_0000273569" description="L-amino-acid oxidase">
    <location>
        <begin position="1"/>
        <end position="38" status="greater than"/>
    </location>
</feature>
<feature type="disulfide bond" evidence="2">
    <location>
        <begin position="10"/>
        <end status="unknown"/>
    </location>
</feature>
<feature type="non-terminal residue" evidence="5">
    <location>
        <position position="38"/>
    </location>
</feature>
<organism>
    <name type="scientific">Naja kaouthia</name>
    <name type="common">Monocled cobra</name>
    <name type="synonym">Naja siamensis</name>
    <dbReference type="NCBI Taxonomy" id="8649"/>
    <lineage>
        <taxon>Eukaryota</taxon>
        <taxon>Metazoa</taxon>
        <taxon>Chordata</taxon>
        <taxon>Craniata</taxon>
        <taxon>Vertebrata</taxon>
        <taxon>Euteleostomi</taxon>
        <taxon>Lepidosauria</taxon>
        <taxon>Squamata</taxon>
        <taxon>Bifurcata</taxon>
        <taxon>Unidentata</taxon>
        <taxon>Episquamata</taxon>
        <taxon>Toxicofera</taxon>
        <taxon>Serpentes</taxon>
        <taxon>Colubroidea</taxon>
        <taxon>Elapidae</taxon>
        <taxon>Elapinae</taxon>
        <taxon>Naja</taxon>
    </lineage>
</organism>
<keyword id="KW-0044">Antibiotic</keyword>
<keyword id="KW-0929">Antimicrobial</keyword>
<keyword id="KW-0053">Apoptosis</keyword>
<keyword id="KW-0204">Cytolysis</keyword>
<keyword id="KW-0903">Direct protein sequencing</keyword>
<keyword id="KW-1015">Disulfide bond</keyword>
<keyword id="KW-0274">FAD</keyword>
<keyword id="KW-0285">Flavoprotein</keyword>
<keyword id="KW-0325">Glycoprotein</keyword>
<keyword id="KW-0354">Hemolysis</keyword>
<keyword id="KW-1199">Hemostasis impairing toxin</keyword>
<keyword id="KW-0560">Oxidoreductase</keyword>
<keyword id="KW-1201">Platelet aggregation inhibiting toxin</keyword>
<keyword id="KW-0964">Secreted</keyword>
<keyword id="KW-0800">Toxin</keyword>
<proteinExistence type="evidence at protein level"/>
<name>OXLA_NAJKA</name>
<accession>P0C2D4</accession>
<sequence length="38" mass="4514">DDRRSPLEECFQQNDYEEFLEIAKNGLKKTXNPKHVXV</sequence>